<organism>
    <name type="scientific">Pseudomonas fluorescens (strain SBW25)</name>
    <dbReference type="NCBI Taxonomy" id="216595"/>
    <lineage>
        <taxon>Bacteria</taxon>
        <taxon>Pseudomonadati</taxon>
        <taxon>Pseudomonadota</taxon>
        <taxon>Gammaproteobacteria</taxon>
        <taxon>Pseudomonadales</taxon>
        <taxon>Pseudomonadaceae</taxon>
        <taxon>Pseudomonas</taxon>
    </lineage>
</organism>
<dbReference type="EC" id="2.8.1.1" evidence="1"/>
<dbReference type="EMBL" id="AM181176">
    <property type="protein sequence ID" value="CAY52854.1"/>
    <property type="molecule type" value="Genomic_DNA"/>
</dbReference>
<dbReference type="RefSeq" id="WP_015886178.1">
    <property type="nucleotide sequence ID" value="NC_012660.1"/>
</dbReference>
<dbReference type="SMR" id="C3K330"/>
<dbReference type="STRING" id="294.SRM1_05241"/>
<dbReference type="PATRIC" id="fig|216595.4.peg.5705"/>
<dbReference type="eggNOG" id="COG0607">
    <property type="taxonomic scope" value="Bacteria"/>
</dbReference>
<dbReference type="HOGENOM" id="CLU_089574_14_0_6"/>
<dbReference type="OrthoDB" id="9811849at2"/>
<dbReference type="GO" id="GO:0005737">
    <property type="term" value="C:cytoplasm"/>
    <property type="evidence" value="ECO:0007669"/>
    <property type="project" value="UniProtKB-SubCell"/>
</dbReference>
<dbReference type="GO" id="GO:0004792">
    <property type="term" value="F:thiosulfate-cyanide sulfurtransferase activity"/>
    <property type="evidence" value="ECO:0007669"/>
    <property type="project" value="UniProtKB-UniRule"/>
</dbReference>
<dbReference type="GO" id="GO:0006071">
    <property type="term" value="P:glycerol metabolic process"/>
    <property type="evidence" value="ECO:0007669"/>
    <property type="project" value="UniProtKB-UniRule"/>
</dbReference>
<dbReference type="CDD" id="cd01444">
    <property type="entry name" value="GlpE_ST"/>
    <property type="match status" value="1"/>
</dbReference>
<dbReference type="Gene3D" id="3.40.250.10">
    <property type="entry name" value="Rhodanese-like domain"/>
    <property type="match status" value="1"/>
</dbReference>
<dbReference type="HAMAP" id="MF_01009">
    <property type="entry name" value="Thiosulf_sulfurtr"/>
    <property type="match status" value="1"/>
</dbReference>
<dbReference type="InterPro" id="IPR050229">
    <property type="entry name" value="GlpE_sulfurtransferase"/>
</dbReference>
<dbReference type="InterPro" id="IPR001763">
    <property type="entry name" value="Rhodanese-like_dom"/>
</dbReference>
<dbReference type="InterPro" id="IPR036873">
    <property type="entry name" value="Rhodanese-like_dom_sf"/>
</dbReference>
<dbReference type="InterPro" id="IPR023695">
    <property type="entry name" value="Thiosulf_sulfurTrfase"/>
</dbReference>
<dbReference type="NCBIfam" id="NF001195">
    <property type="entry name" value="PRK00162.1"/>
    <property type="match status" value="1"/>
</dbReference>
<dbReference type="PANTHER" id="PTHR43031">
    <property type="entry name" value="FAD-DEPENDENT OXIDOREDUCTASE"/>
    <property type="match status" value="1"/>
</dbReference>
<dbReference type="PANTHER" id="PTHR43031:SF6">
    <property type="entry name" value="THIOSULFATE SULFURTRANSFERASE GLPE"/>
    <property type="match status" value="1"/>
</dbReference>
<dbReference type="Pfam" id="PF00581">
    <property type="entry name" value="Rhodanese"/>
    <property type="match status" value="1"/>
</dbReference>
<dbReference type="SMART" id="SM00450">
    <property type="entry name" value="RHOD"/>
    <property type="match status" value="1"/>
</dbReference>
<dbReference type="SUPFAM" id="SSF52821">
    <property type="entry name" value="Rhodanese/Cell cycle control phosphatase"/>
    <property type="match status" value="1"/>
</dbReference>
<dbReference type="PROSITE" id="PS50206">
    <property type="entry name" value="RHODANESE_3"/>
    <property type="match status" value="1"/>
</dbReference>
<keyword id="KW-0963">Cytoplasm</keyword>
<keyword id="KW-0808">Transferase</keyword>
<reference key="1">
    <citation type="journal article" date="2009" name="Genome Biol.">
        <title>Genomic and genetic analyses of diversity and plant interactions of Pseudomonas fluorescens.</title>
        <authorList>
            <person name="Silby M.W."/>
            <person name="Cerdeno-Tarraga A.M."/>
            <person name="Vernikos G.S."/>
            <person name="Giddens S.R."/>
            <person name="Jackson R.W."/>
            <person name="Preston G.M."/>
            <person name="Zhang X.-X."/>
            <person name="Moon C.D."/>
            <person name="Gehrig S.M."/>
            <person name="Godfrey S.A.C."/>
            <person name="Knight C.G."/>
            <person name="Malone J.G."/>
            <person name="Robinson Z."/>
            <person name="Spiers A.J."/>
            <person name="Harris S."/>
            <person name="Challis G.L."/>
            <person name="Yaxley A.M."/>
            <person name="Harris D."/>
            <person name="Seeger K."/>
            <person name="Murphy L."/>
            <person name="Rutter S."/>
            <person name="Squares R."/>
            <person name="Quail M.A."/>
            <person name="Saunders E."/>
            <person name="Mavromatis K."/>
            <person name="Brettin T.S."/>
            <person name="Bentley S.D."/>
            <person name="Hothersall J."/>
            <person name="Stephens E."/>
            <person name="Thomas C.M."/>
            <person name="Parkhill J."/>
            <person name="Levy S.B."/>
            <person name="Rainey P.B."/>
            <person name="Thomson N.R."/>
        </authorList>
    </citation>
    <scope>NUCLEOTIDE SEQUENCE [LARGE SCALE GENOMIC DNA]</scope>
    <source>
        <strain>SBW25</strain>
    </source>
</reference>
<evidence type="ECO:0000255" key="1">
    <source>
        <dbReference type="HAMAP-Rule" id="MF_01009"/>
    </source>
</evidence>
<sequence>MSEFKRIPPEHAQALREQGAVVVDIRDQPTYAAGHITGAQHVDNVNIADFIRAADLDAPVIVACYHGNSSQSAAAYLVSQGFSDVYSLDGGFELWRTTYPAEISSGNSQ</sequence>
<comment type="function">
    <text evidence="1">Transferase that catalyzes the transfer of sulfur from thiosulfate to thiophilic acceptors such as cyanide or dithiols. May function in a CysM-independent thiosulfate assimilation pathway by catalyzing the conversion of thiosulfate to sulfite, which can then be used for L-cysteine biosynthesis.</text>
</comment>
<comment type="catalytic activity">
    <reaction evidence="1">
        <text>thiosulfate + hydrogen cyanide = thiocyanate + sulfite + 2 H(+)</text>
        <dbReference type="Rhea" id="RHEA:16881"/>
        <dbReference type="ChEBI" id="CHEBI:15378"/>
        <dbReference type="ChEBI" id="CHEBI:17359"/>
        <dbReference type="ChEBI" id="CHEBI:18022"/>
        <dbReference type="ChEBI" id="CHEBI:18407"/>
        <dbReference type="ChEBI" id="CHEBI:33542"/>
        <dbReference type="EC" id="2.8.1.1"/>
    </reaction>
</comment>
<comment type="catalytic activity">
    <reaction evidence="1">
        <text>thiosulfate + [thioredoxin]-dithiol = [thioredoxin]-disulfide + hydrogen sulfide + sulfite + 2 H(+)</text>
        <dbReference type="Rhea" id="RHEA:83859"/>
        <dbReference type="Rhea" id="RHEA-COMP:10698"/>
        <dbReference type="Rhea" id="RHEA-COMP:10700"/>
        <dbReference type="ChEBI" id="CHEBI:15378"/>
        <dbReference type="ChEBI" id="CHEBI:17359"/>
        <dbReference type="ChEBI" id="CHEBI:29919"/>
        <dbReference type="ChEBI" id="CHEBI:29950"/>
        <dbReference type="ChEBI" id="CHEBI:33542"/>
        <dbReference type="ChEBI" id="CHEBI:50058"/>
    </reaction>
</comment>
<comment type="subcellular location">
    <subcellularLocation>
        <location evidence="1">Cytoplasm</location>
    </subcellularLocation>
</comment>
<comment type="similarity">
    <text evidence="1">Belongs to the GlpE family.</text>
</comment>
<gene>
    <name evidence="1" type="primary">glpE</name>
    <name type="ordered locus">PFLU_5581</name>
</gene>
<protein>
    <recommendedName>
        <fullName evidence="1">Thiosulfate sulfurtransferase GlpE</fullName>
        <ecNumber evidence="1">2.8.1.1</ecNumber>
    </recommendedName>
</protein>
<feature type="chain" id="PRO_1000213191" description="Thiosulfate sulfurtransferase GlpE">
    <location>
        <begin position="1"/>
        <end position="109"/>
    </location>
</feature>
<feature type="domain" description="Rhodanese" evidence="1">
    <location>
        <begin position="16"/>
        <end position="104"/>
    </location>
</feature>
<feature type="active site" description="Cysteine persulfide intermediate" evidence="1">
    <location>
        <position position="64"/>
    </location>
</feature>
<name>GLPE_PSEFS</name>
<proteinExistence type="inferred from homology"/>
<accession>C3K330</accession>